<dbReference type="EMBL" id="BC082408">
    <property type="protein sequence ID" value="AAH82408.1"/>
    <property type="molecule type" value="mRNA"/>
</dbReference>
<dbReference type="RefSeq" id="NP_001087878.1">
    <property type="nucleotide sequence ID" value="NM_001094409.1"/>
</dbReference>
<dbReference type="SMR" id="Q641C9"/>
<dbReference type="GeneID" id="447739"/>
<dbReference type="KEGG" id="xla:447739"/>
<dbReference type="AGR" id="Xenbase:XB-GENE-6253397"/>
<dbReference type="CTD" id="447739"/>
<dbReference type="Xenbase" id="XB-GENE-6253397">
    <property type="gene designation" value="cdc123.S"/>
</dbReference>
<dbReference type="OrthoDB" id="360540at2759"/>
<dbReference type="Proteomes" id="UP000186698">
    <property type="component" value="Chromosome 3S"/>
</dbReference>
<dbReference type="Bgee" id="447739">
    <property type="expression patterns" value="Expressed in gastrula and 19 other cell types or tissues"/>
</dbReference>
<dbReference type="GO" id="GO:0005737">
    <property type="term" value="C:cytoplasm"/>
    <property type="evidence" value="ECO:0000250"/>
    <property type="project" value="UniProtKB"/>
</dbReference>
<dbReference type="GO" id="GO:0005524">
    <property type="term" value="F:ATP binding"/>
    <property type="evidence" value="ECO:0000250"/>
    <property type="project" value="UniProtKB"/>
</dbReference>
<dbReference type="GO" id="GO:0000287">
    <property type="term" value="F:magnesium ion binding"/>
    <property type="evidence" value="ECO:0000250"/>
    <property type="project" value="UniProtKB"/>
</dbReference>
<dbReference type="GO" id="GO:0044183">
    <property type="term" value="F:protein folding chaperone"/>
    <property type="evidence" value="ECO:0000250"/>
    <property type="project" value="UniProtKB"/>
</dbReference>
<dbReference type="GO" id="GO:1905143">
    <property type="term" value="P:eukaryotic translation initiation factor 2 complex assembly"/>
    <property type="evidence" value="ECO:0000250"/>
    <property type="project" value="UniProtKB"/>
</dbReference>
<dbReference type="InterPro" id="IPR009772">
    <property type="entry name" value="CDC123"/>
</dbReference>
<dbReference type="PANTHER" id="PTHR15323:SF6">
    <property type="entry name" value="CELL DIVISION CYCLE PROTEIN 123 HOMOLOG"/>
    <property type="match status" value="1"/>
</dbReference>
<dbReference type="PANTHER" id="PTHR15323">
    <property type="entry name" value="D123 PROTEIN"/>
    <property type="match status" value="1"/>
</dbReference>
<dbReference type="Pfam" id="PF07065">
    <property type="entry name" value="D123"/>
    <property type="match status" value="1"/>
</dbReference>
<dbReference type="PIRSF" id="PIRSF007807">
    <property type="entry name" value="Cdc123"/>
    <property type="match status" value="1"/>
</dbReference>
<name>CD123_XENLA</name>
<evidence type="ECO:0000250" key="1">
    <source>
        <dbReference type="UniProtKB" id="O75794"/>
    </source>
</evidence>
<evidence type="ECO:0000250" key="2">
    <source>
        <dbReference type="UniProtKB" id="Q05791"/>
    </source>
</evidence>
<evidence type="ECO:0000250" key="3">
    <source>
        <dbReference type="UniProtKB" id="Q62834"/>
    </source>
</evidence>
<evidence type="ECO:0000250" key="4">
    <source>
        <dbReference type="UniProtKB" id="Q9P7N5"/>
    </source>
</evidence>
<evidence type="ECO:0000305" key="5"/>
<gene>
    <name type="primary">cdc123</name>
</gene>
<keyword id="KW-0067">ATP-binding</keyword>
<keyword id="KW-0143">Chaperone</keyword>
<keyword id="KW-0963">Cytoplasm</keyword>
<keyword id="KW-0460">Magnesium</keyword>
<keyword id="KW-0479">Metal-binding</keyword>
<keyword id="KW-0547">Nucleotide-binding</keyword>
<keyword id="KW-1185">Reference proteome</keyword>
<protein>
    <recommendedName>
        <fullName evidence="5">Translation initiation factor eIF2 assembly protein</fullName>
    </recommendedName>
    <alternativeName>
        <fullName>Cell division cycle protein 123 homolog</fullName>
    </alternativeName>
</protein>
<reference key="1">
    <citation type="submission" date="2004-09" db="EMBL/GenBank/DDBJ databases">
        <authorList>
            <consortium name="NIH - Xenopus Gene Collection (XGC) project"/>
        </authorList>
    </citation>
    <scope>NUCLEOTIDE SEQUENCE [LARGE SCALE MRNA]</scope>
    <source>
        <tissue>Kidney</tissue>
    </source>
</reference>
<comment type="function">
    <text evidence="1 2">ATP-dependent protein-folding chaperone for the eIF2 complex (By similarity). Binds to the gamma subunit of the eIF2 complex which allows the subunit to assemble with the alpha and beta subunits (By similarity).</text>
</comment>
<comment type="subcellular location">
    <subcellularLocation>
        <location evidence="3">Cytoplasm</location>
    </subcellularLocation>
</comment>
<comment type="similarity">
    <text evidence="5">Belongs to the CDC123 family.</text>
</comment>
<sequence length="338" mass="39595">MKKEQVLNCQFGQWYPTFKKFSIRSVIIPLPENVKDYLLDDGTLVVSGREESPGCSQRDLNCTEEDEVQWSDDESTATLTAPEFPEFSIKVQEAINSLGGSVFPKLNWSSPRDAYWIALNSSLKCTTLSDIFLLFKSSDFVTHDFTQPFIYCADDSPDPNIKYELVLRKWCELIPGAEFRCFVRENKLIGISQRDYTQYYDHISKQKEEIRKSIQYFFQEHIQYNFPDEDFVFDIYKDSQGKIWLIDFNPFGEVTDSLLFTWEELRRNLCDVPGDVENEDQDCPTFRYTNREVTVQPSPYLSYRLPKDFVDLSTGEDAHKLIDFLKLNRNRQDEDSDD</sequence>
<accession>Q641C9</accession>
<organism>
    <name type="scientific">Xenopus laevis</name>
    <name type="common">African clawed frog</name>
    <dbReference type="NCBI Taxonomy" id="8355"/>
    <lineage>
        <taxon>Eukaryota</taxon>
        <taxon>Metazoa</taxon>
        <taxon>Chordata</taxon>
        <taxon>Craniata</taxon>
        <taxon>Vertebrata</taxon>
        <taxon>Euteleostomi</taxon>
        <taxon>Amphibia</taxon>
        <taxon>Batrachia</taxon>
        <taxon>Anura</taxon>
        <taxon>Pipoidea</taxon>
        <taxon>Pipidae</taxon>
        <taxon>Xenopodinae</taxon>
        <taxon>Xenopus</taxon>
        <taxon>Xenopus</taxon>
    </lineage>
</organism>
<feature type="chain" id="PRO_0000228667" description="Translation initiation factor eIF2 assembly protein">
    <location>
        <begin position="1"/>
        <end position="338"/>
    </location>
</feature>
<feature type="binding site" evidence="1">
    <location>
        <position position="105"/>
    </location>
    <ligand>
        <name>ATP</name>
        <dbReference type="ChEBI" id="CHEBI:30616"/>
    </ligand>
</feature>
<feature type="binding site" evidence="1">
    <location>
        <position position="108"/>
    </location>
    <ligand>
        <name>ATP</name>
        <dbReference type="ChEBI" id="CHEBI:30616"/>
    </ligand>
</feature>
<feature type="binding site" evidence="4">
    <location>
        <position position="110"/>
    </location>
    <ligand>
        <name>ATP</name>
        <dbReference type="ChEBI" id="CHEBI:30616"/>
    </ligand>
</feature>
<feature type="binding site" evidence="4">
    <location>
        <position position="112"/>
    </location>
    <ligand>
        <name>ATP</name>
        <dbReference type="ChEBI" id="CHEBI:30616"/>
    </ligand>
</feature>
<feature type="binding site" evidence="4">
    <location>
        <position position="168"/>
    </location>
    <ligand>
        <name>ATP</name>
        <dbReference type="ChEBI" id="CHEBI:30616"/>
    </ligand>
</feature>
<feature type="binding site" evidence="1">
    <location>
        <position position="169"/>
    </location>
    <ligand>
        <name>ATP</name>
        <dbReference type="ChEBI" id="CHEBI:30616"/>
    </ligand>
</feature>
<feature type="binding site" evidence="4">
    <location>
        <position position="170"/>
    </location>
    <ligand>
        <name>ATP</name>
        <dbReference type="ChEBI" id="CHEBI:30616"/>
    </ligand>
</feature>
<feature type="binding site" evidence="1">
    <location>
        <position position="171"/>
    </location>
    <ligand>
        <name>ATP</name>
        <dbReference type="ChEBI" id="CHEBI:30616"/>
    </ligand>
</feature>
<feature type="binding site" evidence="1">
    <location>
        <position position="178"/>
    </location>
    <ligand>
        <name>ATP</name>
        <dbReference type="ChEBI" id="CHEBI:30616"/>
    </ligand>
</feature>
<feature type="binding site" evidence="1">
    <location>
        <position position="180"/>
    </location>
    <ligand>
        <name>ATP</name>
        <dbReference type="ChEBI" id="CHEBI:30616"/>
    </ligand>
</feature>
<feature type="binding site" evidence="1">
    <location>
        <position position="194"/>
    </location>
    <ligand>
        <name>ATP</name>
        <dbReference type="ChEBI" id="CHEBI:30616"/>
    </ligand>
</feature>
<feature type="binding site" evidence="4">
    <location>
        <position position="234"/>
    </location>
    <ligand>
        <name>ATP</name>
        <dbReference type="ChEBI" id="CHEBI:30616"/>
    </ligand>
</feature>
<feature type="binding site" evidence="1">
    <location>
        <position position="247"/>
    </location>
    <ligand>
        <name>ATP</name>
        <dbReference type="ChEBI" id="CHEBI:30616"/>
    </ligand>
</feature>
<feature type="binding site" evidence="1">
    <location>
        <position position="247"/>
    </location>
    <ligand>
        <name>Mg(2+)</name>
        <dbReference type="ChEBI" id="CHEBI:18420"/>
    </ligand>
</feature>
<feature type="binding site" evidence="1">
    <location>
        <position position="249"/>
    </location>
    <ligand>
        <name>ATP</name>
        <dbReference type="ChEBI" id="CHEBI:30616"/>
    </ligand>
</feature>
<feature type="binding site" evidence="1">
    <location>
        <position position="249"/>
    </location>
    <ligand>
        <name>Mg(2+)</name>
        <dbReference type="ChEBI" id="CHEBI:18420"/>
    </ligand>
</feature>
<proteinExistence type="evidence at transcript level"/>